<proteinExistence type="evidence at transcript level"/>
<keyword id="KW-0378">Hydrolase</keyword>
<keyword id="KW-0460">Magnesium</keyword>
<keyword id="KW-0464">Manganese</keyword>
<keyword id="KW-0479">Metal-binding</keyword>
<keyword id="KW-0904">Protein phosphatase</keyword>
<keyword id="KW-1185">Reference proteome</keyword>
<reference key="1">
    <citation type="journal article" date="2000" name="Nature">
        <title>Sequence and analysis of chromosome 3 of the plant Arabidopsis thaliana.</title>
        <authorList>
            <person name="Salanoubat M."/>
            <person name="Lemcke K."/>
            <person name="Rieger M."/>
            <person name="Ansorge W."/>
            <person name="Unseld M."/>
            <person name="Fartmann B."/>
            <person name="Valle G."/>
            <person name="Bloecker H."/>
            <person name="Perez-Alonso M."/>
            <person name="Obermaier B."/>
            <person name="Delseny M."/>
            <person name="Boutry M."/>
            <person name="Grivell L.A."/>
            <person name="Mache R."/>
            <person name="Puigdomenech P."/>
            <person name="De Simone V."/>
            <person name="Choisne N."/>
            <person name="Artiguenave F."/>
            <person name="Robert C."/>
            <person name="Brottier P."/>
            <person name="Wincker P."/>
            <person name="Cattolico L."/>
            <person name="Weissenbach J."/>
            <person name="Saurin W."/>
            <person name="Quetier F."/>
            <person name="Schaefer M."/>
            <person name="Mueller-Auer S."/>
            <person name="Gabel C."/>
            <person name="Fuchs M."/>
            <person name="Benes V."/>
            <person name="Wurmbach E."/>
            <person name="Drzonek H."/>
            <person name="Erfle H."/>
            <person name="Jordan N."/>
            <person name="Bangert S."/>
            <person name="Wiedelmann R."/>
            <person name="Kranz H."/>
            <person name="Voss H."/>
            <person name="Holland R."/>
            <person name="Brandt P."/>
            <person name="Nyakatura G."/>
            <person name="Vezzi A."/>
            <person name="D'Angelo M."/>
            <person name="Pallavicini A."/>
            <person name="Toppo S."/>
            <person name="Simionati B."/>
            <person name="Conrad A."/>
            <person name="Hornischer K."/>
            <person name="Kauer G."/>
            <person name="Loehnert T.-H."/>
            <person name="Nordsiek G."/>
            <person name="Reichelt J."/>
            <person name="Scharfe M."/>
            <person name="Schoen O."/>
            <person name="Bargues M."/>
            <person name="Terol J."/>
            <person name="Climent J."/>
            <person name="Navarro P."/>
            <person name="Collado C."/>
            <person name="Perez-Perez A."/>
            <person name="Ottenwaelder B."/>
            <person name="Duchemin D."/>
            <person name="Cooke R."/>
            <person name="Laudie M."/>
            <person name="Berger-Llauro C."/>
            <person name="Purnelle B."/>
            <person name="Masuy D."/>
            <person name="de Haan M."/>
            <person name="Maarse A.C."/>
            <person name="Alcaraz J.-P."/>
            <person name="Cottet A."/>
            <person name="Casacuberta E."/>
            <person name="Monfort A."/>
            <person name="Argiriou A."/>
            <person name="Flores M."/>
            <person name="Liguori R."/>
            <person name="Vitale D."/>
            <person name="Mannhaupt G."/>
            <person name="Haase D."/>
            <person name="Schoof H."/>
            <person name="Rudd S."/>
            <person name="Zaccaria P."/>
            <person name="Mewes H.-W."/>
            <person name="Mayer K.F.X."/>
            <person name="Kaul S."/>
            <person name="Town C.D."/>
            <person name="Koo H.L."/>
            <person name="Tallon L.J."/>
            <person name="Jenkins J."/>
            <person name="Rooney T."/>
            <person name="Rizzo M."/>
            <person name="Walts A."/>
            <person name="Utterback T."/>
            <person name="Fujii C.Y."/>
            <person name="Shea T.P."/>
            <person name="Creasy T.H."/>
            <person name="Haas B."/>
            <person name="Maiti R."/>
            <person name="Wu D."/>
            <person name="Peterson J."/>
            <person name="Van Aken S."/>
            <person name="Pai G."/>
            <person name="Militscher J."/>
            <person name="Sellers P."/>
            <person name="Gill J.E."/>
            <person name="Feldblyum T.V."/>
            <person name="Preuss D."/>
            <person name="Lin X."/>
            <person name="Nierman W.C."/>
            <person name="Salzberg S.L."/>
            <person name="White O."/>
            <person name="Venter J.C."/>
            <person name="Fraser C.M."/>
            <person name="Kaneko T."/>
            <person name="Nakamura Y."/>
            <person name="Sato S."/>
            <person name="Kato T."/>
            <person name="Asamizu E."/>
            <person name="Sasamoto S."/>
            <person name="Kimura T."/>
            <person name="Idesawa K."/>
            <person name="Kawashima K."/>
            <person name="Kishida Y."/>
            <person name="Kiyokawa C."/>
            <person name="Kohara M."/>
            <person name="Matsumoto M."/>
            <person name="Matsuno A."/>
            <person name="Muraki A."/>
            <person name="Nakayama S."/>
            <person name="Nakazaki N."/>
            <person name="Shinpo S."/>
            <person name="Takeuchi C."/>
            <person name="Wada T."/>
            <person name="Watanabe A."/>
            <person name="Yamada M."/>
            <person name="Yasuda M."/>
            <person name="Tabata S."/>
        </authorList>
    </citation>
    <scope>NUCLEOTIDE SEQUENCE [LARGE SCALE GENOMIC DNA]</scope>
    <source>
        <strain>cv. Columbia</strain>
    </source>
</reference>
<reference key="2">
    <citation type="journal article" date="2017" name="Plant J.">
        <title>Araport11: a complete reannotation of the Arabidopsis thaliana reference genome.</title>
        <authorList>
            <person name="Cheng C.Y."/>
            <person name="Krishnakumar V."/>
            <person name="Chan A.P."/>
            <person name="Thibaud-Nissen F."/>
            <person name="Schobel S."/>
            <person name="Town C.D."/>
        </authorList>
    </citation>
    <scope>GENOME REANNOTATION</scope>
    <source>
        <strain>cv. Columbia</strain>
    </source>
</reference>
<reference key="3">
    <citation type="journal article" date="2003" name="Science">
        <title>Empirical analysis of transcriptional activity in the Arabidopsis genome.</title>
        <authorList>
            <person name="Yamada K."/>
            <person name="Lim J."/>
            <person name="Dale J.M."/>
            <person name="Chen H."/>
            <person name="Shinn P."/>
            <person name="Palm C.J."/>
            <person name="Southwick A.M."/>
            <person name="Wu H.C."/>
            <person name="Kim C.J."/>
            <person name="Nguyen M."/>
            <person name="Pham P.K."/>
            <person name="Cheuk R.F."/>
            <person name="Karlin-Newmann G."/>
            <person name="Liu S.X."/>
            <person name="Lam B."/>
            <person name="Sakano H."/>
            <person name="Wu T."/>
            <person name="Yu G."/>
            <person name="Miranda M."/>
            <person name="Quach H.L."/>
            <person name="Tripp M."/>
            <person name="Chang C.H."/>
            <person name="Lee J.M."/>
            <person name="Toriumi M.J."/>
            <person name="Chan M.M."/>
            <person name="Tang C.C."/>
            <person name="Onodera C.S."/>
            <person name="Deng J.M."/>
            <person name="Akiyama K."/>
            <person name="Ansari Y."/>
            <person name="Arakawa T."/>
            <person name="Banh J."/>
            <person name="Banno F."/>
            <person name="Bowser L."/>
            <person name="Brooks S.Y."/>
            <person name="Carninci P."/>
            <person name="Chao Q."/>
            <person name="Choy N."/>
            <person name="Enju A."/>
            <person name="Goldsmith A.D."/>
            <person name="Gurjal M."/>
            <person name="Hansen N.F."/>
            <person name="Hayashizaki Y."/>
            <person name="Johnson-Hopson C."/>
            <person name="Hsuan V.W."/>
            <person name="Iida K."/>
            <person name="Karnes M."/>
            <person name="Khan S."/>
            <person name="Koesema E."/>
            <person name="Ishida J."/>
            <person name="Jiang P.X."/>
            <person name="Jones T."/>
            <person name="Kawai J."/>
            <person name="Kamiya A."/>
            <person name="Meyers C."/>
            <person name="Nakajima M."/>
            <person name="Narusaka M."/>
            <person name="Seki M."/>
            <person name="Sakurai T."/>
            <person name="Satou M."/>
            <person name="Tamse R."/>
            <person name="Vaysberg M."/>
            <person name="Wallender E.K."/>
            <person name="Wong C."/>
            <person name="Yamamura Y."/>
            <person name="Yuan S."/>
            <person name="Shinozaki K."/>
            <person name="Davis R.W."/>
            <person name="Theologis A."/>
            <person name="Ecker J.R."/>
        </authorList>
    </citation>
    <scope>NUCLEOTIDE SEQUENCE [LARGE SCALE MRNA]</scope>
    <source>
        <strain>cv. Columbia</strain>
    </source>
</reference>
<reference key="4">
    <citation type="submission" date="2006-07" db="EMBL/GenBank/DDBJ databases">
        <title>Large-scale analysis of RIKEN Arabidopsis full-length (RAFL) cDNAs.</title>
        <authorList>
            <person name="Totoki Y."/>
            <person name="Seki M."/>
            <person name="Ishida J."/>
            <person name="Nakajima M."/>
            <person name="Enju A."/>
            <person name="Kamiya A."/>
            <person name="Narusaka M."/>
            <person name="Shin-i T."/>
            <person name="Nakagawa M."/>
            <person name="Sakamoto N."/>
            <person name="Oishi K."/>
            <person name="Kohara Y."/>
            <person name="Kobayashi M."/>
            <person name="Toyoda A."/>
            <person name="Sakaki Y."/>
            <person name="Sakurai T."/>
            <person name="Iida K."/>
            <person name="Akiyama K."/>
            <person name="Satou M."/>
            <person name="Toyoda T."/>
            <person name="Konagaya A."/>
            <person name="Carninci P."/>
            <person name="Kawai J."/>
            <person name="Hayashizaki Y."/>
            <person name="Shinozaki K."/>
        </authorList>
    </citation>
    <scope>NUCLEOTIDE SEQUENCE [LARGE SCALE MRNA]</scope>
    <source>
        <strain>cv. Columbia</strain>
    </source>
</reference>
<reference key="5">
    <citation type="journal article" date="2008" name="BMC Genomics">
        <title>Genome-wide and expression analysis of protein phosphatase 2C in rice and Arabidopsis.</title>
        <authorList>
            <person name="Xue T."/>
            <person name="Wang D."/>
            <person name="Zhang S."/>
            <person name="Ehlting J."/>
            <person name="Ni F."/>
            <person name="Jacab S."/>
            <person name="Zheng C."/>
            <person name="Zhong Y."/>
        </authorList>
    </citation>
    <scope>GENE FAMILY</scope>
    <scope>NOMENCLATURE</scope>
</reference>
<evidence type="ECO:0000250" key="1"/>
<evidence type="ECO:0000255" key="2">
    <source>
        <dbReference type="PROSITE-ProRule" id="PRU01082"/>
    </source>
</evidence>
<evidence type="ECO:0000256" key="3">
    <source>
        <dbReference type="SAM" id="MobiDB-lite"/>
    </source>
</evidence>
<evidence type="ECO:0000305" key="4"/>
<accession>Q7XJ53</accession>
<accession>Q9M8J1</accession>
<dbReference type="EC" id="3.1.3.16"/>
<dbReference type="EMBL" id="AC018907">
    <property type="protein sequence ID" value="AAF30320.1"/>
    <property type="status" value="ALT_SEQ"/>
    <property type="molecule type" value="Genomic_DNA"/>
</dbReference>
<dbReference type="EMBL" id="CP002686">
    <property type="protein sequence ID" value="AEE74367.1"/>
    <property type="molecule type" value="Genomic_DNA"/>
</dbReference>
<dbReference type="EMBL" id="BT009732">
    <property type="protein sequence ID" value="AAP88366.1"/>
    <property type="molecule type" value="mRNA"/>
</dbReference>
<dbReference type="EMBL" id="AK227928">
    <property type="protein sequence ID" value="BAE99898.1"/>
    <property type="molecule type" value="mRNA"/>
</dbReference>
<dbReference type="RefSeq" id="NP_187278.2">
    <property type="nucleotide sequence ID" value="NM_111502.5"/>
</dbReference>
<dbReference type="SMR" id="Q7XJ53"/>
<dbReference type="BioGRID" id="5136">
    <property type="interactions" value="1"/>
</dbReference>
<dbReference type="FunCoup" id="Q7XJ53">
    <property type="interactions" value="201"/>
</dbReference>
<dbReference type="IntAct" id="Q7XJ53">
    <property type="interactions" value="1"/>
</dbReference>
<dbReference type="MINT" id="Q7XJ53"/>
<dbReference type="iPTMnet" id="Q7XJ53"/>
<dbReference type="PaxDb" id="3702-AT3G06270.1"/>
<dbReference type="ProteomicsDB" id="248880"/>
<dbReference type="EnsemblPlants" id="AT3G06270.1">
    <property type="protein sequence ID" value="AT3G06270.1"/>
    <property type="gene ID" value="AT3G06270"/>
</dbReference>
<dbReference type="GeneID" id="819801"/>
<dbReference type="Gramene" id="AT3G06270.1">
    <property type="protein sequence ID" value="AT3G06270.1"/>
    <property type="gene ID" value="AT3G06270"/>
</dbReference>
<dbReference type="KEGG" id="ath:AT3G06270"/>
<dbReference type="Araport" id="AT3G06270"/>
<dbReference type="TAIR" id="AT3G06270"/>
<dbReference type="eggNOG" id="KOG0698">
    <property type="taxonomic scope" value="Eukaryota"/>
</dbReference>
<dbReference type="HOGENOM" id="CLU_013173_6_2_1"/>
<dbReference type="InParanoid" id="Q7XJ53"/>
<dbReference type="OMA" id="HNFRLEY"/>
<dbReference type="OrthoDB" id="10264738at2759"/>
<dbReference type="PhylomeDB" id="Q7XJ53"/>
<dbReference type="PRO" id="PR:Q7XJ53"/>
<dbReference type="Proteomes" id="UP000006548">
    <property type="component" value="Chromosome 3"/>
</dbReference>
<dbReference type="ExpressionAtlas" id="Q7XJ53">
    <property type="expression patterns" value="baseline and differential"/>
</dbReference>
<dbReference type="GO" id="GO:0046872">
    <property type="term" value="F:metal ion binding"/>
    <property type="evidence" value="ECO:0007669"/>
    <property type="project" value="UniProtKB-KW"/>
</dbReference>
<dbReference type="GO" id="GO:0004722">
    <property type="term" value="F:protein serine/threonine phosphatase activity"/>
    <property type="evidence" value="ECO:0007669"/>
    <property type="project" value="UniProtKB-EC"/>
</dbReference>
<dbReference type="CDD" id="cd00143">
    <property type="entry name" value="PP2Cc"/>
    <property type="match status" value="1"/>
</dbReference>
<dbReference type="FunFam" id="3.60.40.10:FF:000007">
    <property type="entry name" value="Phosphatase 2C and cyclic nucleotide-binding/kinase domain-containing protein"/>
    <property type="match status" value="1"/>
</dbReference>
<dbReference type="Gene3D" id="3.60.40.10">
    <property type="entry name" value="PPM-type phosphatase domain"/>
    <property type="match status" value="1"/>
</dbReference>
<dbReference type="InterPro" id="IPR015655">
    <property type="entry name" value="PP2C"/>
</dbReference>
<dbReference type="InterPro" id="IPR000222">
    <property type="entry name" value="PP2C_BS"/>
</dbReference>
<dbReference type="InterPro" id="IPR036457">
    <property type="entry name" value="PPM-type-like_dom_sf"/>
</dbReference>
<dbReference type="InterPro" id="IPR001932">
    <property type="entry name" value="PPM-type_phosphatase-like_dom"/>
</dbReference>
<dbReference type="PANTHER" id="PTHR47992">
    <property type="entry name" value="PROTEIN PHOSPHATASE"/>
    <property type="match status" value="1"/>
</dbReference>
<dbReference type="Pfam" id="PF00481">
    <property type="entry name" value="PP2C"/>
    <property type="match status" value="1"/>
</dbReference>
<dbReference type="SMART" id="SM00332">
    <property type="entry name" value="PP2Cc"/>
    <property type="match status" value="1"/>
</dbReference>
<dbReference type="SUPFAM" id="SSF81606">
    <property type="entry name" value="PP2C-like"/>
    <property type="match status" value="1"/>
</dbReference>
<dbReference type="PROSITE" id="PS01032">
    <property type="entry name" value="PPM_1"/>
    <property type="match status" value="1"/>
</dbReference>
<dbReference type="PROSITE" id="PS51746">
    <property type="entry name" value="PPM_2"/>
    <property type="match status" value="1"/>
</dbReference>
<name>P2C35_ARATH</name>
<protein>
    <recommendedName>
        <fullName>Probable protein phosphatase 2C 35</fullName>
        <shortName>AtPP2C35</shortName>
        <ecNumber>3.1.3.16</ecNumber>
    </recommendedName>
</protein>
<organism>
    <name type="scientific">Arabidopsis thaliana</name>
    <name type="common">Mouse-ear cress</name>
    <dbReference type="NCBI Taxonomy" id="3702"/>
    <lineage>
        <taxon>Eukaryota</taxon>
        <taxon>Viridiplantae</taxon>
        <taxon>Streptophyta</taxon>
        <taxon>Embryophyta</taxon>
        <taxon>Tracheophyta</taxon>
        <taxon>Spermatophyta</taxon>
        <taxon>Magnoliopsida</taxon>
        <taxon>eudicotyledons</taxon>
        <taxon>Gunneridae</taxon>
        <taxon>Pentapetalae</taxon>
        <taxon>rosids</taxon>
        <taxon>malvids</taxon>
        <taxon>Brassicales</taxon>
        <taxon>Brassicaceae</taxon>
        <taxon>Camelineae</taxon>
        <taxon>Arabidopsis</taxon>
    </lineage>
</organism>
<feature type="chain" id="PRO_0000367962" description="Probable protein phosphatase 2C 35">
    <location>
        <begin position="1"/>
        <end position="348"/>
    </location>
</feature>
<feature type="domain" description="PPM-type phosphatase" evidence="2">
    <location>
        <begin position="52"/>
        <end position="342"/>
    </location>
</feature>
<feature type="region of interest" description="Disordered" evidence="3">
    <location>
        <begin position="11"/>
        <end position="40"/>
    </location>
</feature>
<feature type="compositionally biased region" description="Low complexity" evidence="3">
    <location>
        <begin position="11"/>
        <end position="24"/>
    </location>
</feature>
<feature type="binding site" evidence="1">
    <location>
        <position position="93"/>
    </location>
    <ligand>
        <name>Mn(2+)</name>
        <dbReference type="ChEBI" id="CHEBI:29035"/>
        <label>1</label>
    </ligand>
</feature>
<feature type="binding site" evidence="1">
    <location>
        <position position="93"/>
    </location>
    <ligand>
        <name>Mn(2+)</name>
        <dbReference type="ChEBI" id="CHEBI:29035"/>
        <label>2</label>
    </ligand>
</feature>
<feature type="binding site" evidence="1">
    <location>
        <position position="94"/>
    </location>
    <ligand>
        <name>Mn(2+)</name>
        <dbReference type="ChEBI" id="CHEBI:29035"/>
        <label>1</label>
    </ligand>
</feature>
<feature type="binding site" evidence="1">
    <location>
        <position position="289"/>
    </location>
    <ligand>
        <name>Mn(2+)</name>
        <dbReference type="ChEBI" id="CHEBI:29035"/>
        <label>2</label>
    </ligand>
</feature>
<feature type="binding site" evidence="1">
    <location>
        <position position="333"/>
    </location>
    <ligand>
        <name>Mn(2+)</name>
        <dbReference type="ChEBI" id="CHEBI:29035"/>
        <label>2</label>
    </ligand>
</feature>
<gene>
    <name type="ordered locus">At3g06270</name>
    <name type="ORF">F28L1.21</name>
</gene>
<sequence>MGCVQCKCCSRYPSSSSDGDSRGPLEANGVLKGKDQKPLGSIHVPSPNFDMVYSVLSQRGYYPDSPDKENQDTYCIKTELQGNPNVHFFGVFDGHGVLGTQCSNFVKERVVEMLSEDPTLLEDPEKAYKSAFLRVNEELHDSEIDDSMSGTTAITVLVVGDKIYVANVGDSRAVLAVKDRNRILAEDLSYDQTPFRKDECERVKACGARVLSVDQVEGLKDPNIQTWANEESEGGDPPRLWVQNGMYPGTAFTRSVGDFTAESIGVIAEPEVSMVHLSPNHLFFVVASDGIFEFLPSQAVVDMVGRYADPRDGCAAAAAESYKLWLEHENRTDDITIIIVQIKKLSNE</sequence>
<comment type="catalytic activity">
    <reaction>
        <text>O-phospho-L-seryl-[protein] + H2O = L-seryl-[protein] + phosphate</text>
        <dbReference type="Rhea" id="RHEA:20629"/>
        <dbReference type="Rhea" id="RHEA-COMP:9863"/>
        <dbReference type="Rhea" id="RHEA-COMP:11604"/>
        <dbReference type="ChEBI" id="CHEBI:15377"/>
        <dbReference type="ChEBI" id="CHEBI:29999"/>
        <dbReference type="ChEBI" id="CHEBI:43474"/>
        <dbReference type="ChEBI" id="CHEBI:83421"/>
        <dbReference type="EC" id="3.1.3.16"/>
    </reaction>
</comment>
<comment type="catalytic activity">
    <reaction>
        <text>O-phospho-L-threonyl-[protein] + H2O = L-threonyl-[protein] + phosphate</text>
        <dbReference type="Rhea" id="RHEA:47004"/>
        <dbReference type="Rhea" id="RHEA-COMP:11060"/>
        <dbReference type="Rhea" id="RHEA-COMP:11605"/>
        <dbReference type="ChEBI" id="CHEBI:15377"/>
        <dbReference type="ChEBI" id="CHEBI:30013"/>
        <dbReference type="ChEBI" id="CHEBI:43474"/>
        <dbReference type="ChEBI" id="CHEBI:61977"/>
        <dbReference type="EC" id="3.1.3.16"/>
    </reaction>
</comment>
<comment type="cofactor">
    <cofactor evidence="1">
        <name>Mg(2+)</name>
        <dbReference type="ChEBI" id="CHEBI:18420"/>
    </cofactor>
    <cofactor evidence="1">
        <name>Mn(2+)</name>
        <dbReference type="ChEBI" id="CHEBI:29035"/>
    </cofactor>
    <text evidence="1">Binds 2 magnesium or manganese ions per subunit.</text>
</comment>
<comment type="similarity">
    <text evidence="4">Belongs to the PP2C family.</text>
</comment>
<comment type="sequence caution" evidence="4">
    <conflict type="erroneous gene model prediction">
        <sequence resource="EMBL-CDS" id="AAF30320"/>
    </conflict>
</comment>